<accession>Q8WI09</accession>
<sequence length="184" mass="21241">MKRQSEWIRVESIRGARRISNFFWAFILILGALGFLLVGSSSYLGRDLIPLLPSQQIVFIPQGIVMCFYGIAGISIGFYLGFAISWDIGNGYNLFDKQRGIVRIFRWGFPGENRRICIQFFMKDIQAIGLEIREGFYSRRIIYMRMKGQQKIFLTHISENSTLKEMEEKAANLARFMCVSIEGI</sequence>
<organism>
    <name type="scientific">Psilotum nudum</name>
    <name type="common">Whisk fern</name>
    <name type="synonym">Lycopodium nudum</name>
    <dbReference type="NCBI Taxonomy" id="3240"/>
    <lineage>
        <taxon>Eukaryota</taxon>
        <taxon>Viridiplantae</taxon>
        <taxon>Streptophyta</taxon>
        <taxon>Embryophyta</taxon>
        <taxon>Tracheophyta</taxon>
        <taxon>Polypodiopsida</taxon>
        <taxon>Ophioglossidae</taxon>
        <taxon>Psilotales</taxon>
        <taxon>Psilotaceae</taxon>
        <taxon>Psilotum</taxon>
    </lineage>
</organism>
<reference key="1">
    <citation type="journal article" date="2004" name="Mol. Biol. Evol.">
        <title>Chloroplast phylogeny indicates that bryophytes are monophyletic.</title>
        <authorList>
            <person name="Nishiyama T."/>
            <person name="Wolf P.G."/>
            <person name="Kugita M."/>
            <person name="Sinclair R.B."/>
            <person name="Sugita M."/>
            <person name="Sugiura C."/>
            <person name="Wakasugi T."/>
            <person name="Yamada K."/>
            <person name="Yoshinaga K."/>
            <person name="Yamaguchi K."/>
            <person name="Ueda K."/>
            <person name="Hasebe M."/>
        </authorList>
    </citation>
    <scope>NUCLEOTIDE SEQUENCE [LARGE SCALE GENOMIC DNA]</scope>
    <source>
        <strain>Kingyoku</strain>
    </source>
</reference>
<dbReference type="EMBL" id="AP004638">
    <property type="protein sequence ID" value="BAB84227.1"/>
    <property type="molecule type" value="Genomic_DNA"/>
</dbReference>
<dbReference type="RefSeq" id="NP_569640.1">
    <property type="nucleotide sequence ID" value="NC_003386.1"/>
</dbReference>
<dbReference type="GeneID" id="2545235"/>
<dbReference type="GO" id="GO:0009535">
    <property type="term" value="C:chloroplast thylakoid membrane"/>
    <property type="evidence" value="ECO:0007669"/>
    <property type="project" value="UniProtKB-SubCell"/>
</dbReference>
<dbReference type="GO" id="GO:0009522">
    <property type="term" value="C:photosystem I"/>
    <property type="evidence" value="ECO:0007669"/>
    <property type="project" value="InterPro"/>
</dbReference>
<dbReference type="GO" id="GO:0015979">
    <property type="term" value="P:photosynthesis"/>
    <property type="evidence" value="ECO:0007669"/>
    <property type="project" value="UniProtKB-UniRule"/>
</dbReference>
<dbReference type="HAMAP" id="MF_00437">
    <property type="entry name" value="Ycf4"/>
    <property type="match status" value="1"/>
</dbReference>
<dbReference type="InterPro" id="IPR003359">
    <property type="entry name" value="PSI_Ycf4_assembly"/>
</dbReference>
<dbReference type="PANTHER" id="PTHR33288">
    <property type="match status" value="1"/>
</dbReference>
<dbReference type="PANTHER" id="PTHR33288:SF4">
    <property type="entry name" value="PHOTOSYSTEM I ASSEMBLY PROTEIN YCF4"/>
    <property type="match status" value="1"/>
</dbReference>
<dbReference type="Pfam" id="PF02392">
    <property type="entry name" value="Ycf4"/>
    <property type="match status" value="1"/>
</dbReference>
<proteinExistence type="inferred from homology"/>
<evidence type="ECO:0000255" key="1">
    <source>
        <dbReference type="HAMAP-Rule" id="MF_00437"/>
    </source>
</evidence>
<comment type="function">
    <text evidence="1">Seems to be required for the assembly of the photosystem I complex.</text>
</comment>
<comment type="subcellular location">
    <subcellularLocation>
        <location evidence="1">Plastid</location>
        <location evidence="1">Chloroplast thylakoid membrane</location>
        <topology evidence="1">Multi-pass membrane protein</topology>
    </subcellularLocation>
</comment>
<comment type="similarity">
    <text evidence="1">Belongs to the Ycf4 family.</text>
</comment>
<geneLocation type="chloroplast"/>
<protein>
    <recommendedName>
        <fullName evidence="1">Photosystem I assembly protein Ycf4</fullName>
    </recommendedName>
</protein>
<keyword id="KW-0150">Chloroplast</keyword>
<keyword id="KW-0472">Membrane</keyword>
<keyword id="KW-0602">Photosynthesis</keyword>
<keyword id="KW-0934">Plastid</keyword>
<keyword id="KW-0793">Thylakoid</keyword>
<keyword id="KW-0812">Transmembrane</keyword>
<keyword id="KW-1133">Transmembrane helix</keyword>
<name>YCF4_PSINU</name>
<feature type="chain" id="PRO_0000217625" description="Photosystem I assembly protein Ycf4">
    <location>
        <begin position="1"/>
        <end position="184"/>
    </location>
</feature>
<feature type="transmembrane region" description="Helical" evidence="1">
    <location>
        <begin position="21"/>
        <end position="43"/>
    </location>
</feature>
<feature type="transmembrane region" description="Helical" evidence="1">
    <location>
        <begin position="58"/>
        <end position="80"/>
    </location>
</feature>
<gene>
    <name evidence="1" type="primary">ycf4</name>
</gene>